<comment type="function">
    <text evidence="1">A putative beta subtype methylase whose recognition site is unknown.</text>
</comment>
<comment type="similarity">
    <text evidence="2">Belongs to the N(4)/N(6)-methyltransferase family.</text>
</comment>
<accession>Q9S4X2</accession>
<accession>Q7AJQ5</accession>
<dbReference type="EC" id="2.1.1.-"/>
<dbReference type="EMBL" id="AF106329">
    <property type="protein sequence ID" value="AAD47178.1"/>
    <property type="molecule type" value="Genomic_DNA"/>
</dbReference>
<dbReference type="EMBL" id="AP001918">
    <property type="protein sequence ID" value="BAA97922.1"/>
    <property type="molecule type" value="Genomic_DNA"/>
</dbReference>
<dbReference type="RefSeq" id="NP_061431.1">
    <property type="nucleotide sequence ID" value="NC_002483.1"/>
</dbReference>
<dbReference type="RefSeq" id="WP_000085939.1">
    <property type="nucleotide sequence ID" value="NZ_JACEFS010000057.1"/>
</dbReference>
<dbReference type="SMR" id="Q9S4X2"/>
<dbReference type="REBASE" id="191875">
    <property type="entry name" value="M.Apa1468ORF1693P"/>
</dbReference>
<dbReference type="REBASE" id="191876">
    <property type="entry name" value="M.Apa1447ORF1821P"/>
</dbReference>
<dbReference type="REBASE" id="8255">
    <property type="entry name" value="M.EcoCR63FORFAP"/>
</dbReference>
<dbReference type="KEGG" id="ecoc:C3026_24360"/>
<dbReference type="PhylomeDB" id="Q9S4X2"/>
<dbReference type="GO" id="GO:0003677">
    <property type="term" value="F:DNA binding"/>
    <property type="evidence" value="ECO:0007669"/>
    <property type="project" value="InterPro"/>
</dbReference>
<dbReference type="GO" id="GO:0008170">
    <property type="term" value="F:N-methyltransferase activity"/>
    <property type="evidence" value="ECO:0007669"/>
    <property type="project" value="InterPro"/>
</dbReference>
<dbReference type="GO" id="GO:0032259">
    <property type="term" value="P:methylation"/>
    <property type="evidence" value="ECO:0007669"/>
    <property type="project" value="UniProtKB-KW"/>
</dbReference>
<dbReference type="Gene3D" id="3.40.50.150">
    <property type="entry name" value="Vaccinia Virus protein VP39"/>
    <property type="match status" value="1"/>
</dbReference>
<dbReference type="InterPro" id="IPR002941">
    <property type="entry name" value="DNA_methylase_N4/N6"/>
</dbReference>
<dbReference type="InterPro" id="IPR002052">
    <property type="entry name" value="DNA_methylase_N6_adenine_CS"/>
</dbReference>
<dbReference type="InterPro" id="IPR001091">
    <property type="entry name" value="RM_Methyltransferase"/>
</dbReference>
<dbReference type="InterPro" id="IPR029063">
    <property type="entry name" value="SAM-dependent_MTases_sf"/>
</dbReference>
<dbReference type="NCBIfam" id="NF010253">
    <property type="entry name" value="PRK13699.1"/>
    <property type="match status" value="1"/>
</dbReference>
<dbReference type="PANTHER" id="PTHR13370">
    <property type="entry name" value="RNA METHYLASE-RELATED"/>
    <property type="match status" value="1"/>
</dbReference>
<dbReference type="PANTHER" id="PTHR13370:SF3">
    <property type="entry name" value="TRNA (GUANINE(10)-N2)-METHYLTRANSFERASE HOMOLOG"/>
    <property type="match status" value="1"/>
</dbReference>
<dbReference type="Pfam" id="PF01555">
    <property type="entry name" value="N6_N4_Mtase"/>
    <property type="match status" value="1"/>
</dbReference>
<dbReference type="PRINTS" id="PR00508">
    <property type="entry name" value="S21N4MTFRASE"/>
</dbReference>
<dbReference type="SUPFAM" id="SSF53335">
    <property type="entry name" value="S-adenosyl-L-methionine-dependent methyltransferases"/>
    <property type="match status" value="1"/>
</dbReference>
<dbReference type="PROSITE" id="PS00092">
    <property type="entry name" value="N6_MTASE"/>
    <property type="match status" value="1"/>
</dbReference>
<evidence type="ECO:0000303" key="1">
    <source>
    </source>
</evidence>
<evidence type="ECO:0000305" key="2"/>
<organism>
    <name type="scientific">Escherichia coli (strain K12)</name>
    <dbReference type="NCBI Taxonomy" id="83333"/>
    <lineage>
        <taxon>Bacteria</taxon>
        <taxon>Pseudomonadati</taxon>
        <taxon>Pseudomonadota</taxon>
        <taxon>Gammaproteobacteria</taxon>
        <taxon>Enterobacterales</taxon>
        <taxon>Enterobacteriaceae</taxon>
        <taxon>Escherichia</taxon>
    </lineage>
</organism>
<protein>
    <recommendedName>
        <fullName>Putative methylase YubD</fullName>
        <ecNumber>2.1.1.-</ecNumber>
    </recommendedName>
    <alternativeName>
        <fullName evidence="1">Type II methyltransferase M.EcoCR63FORFAP</fullName>
        <shortName evidence="1">M.EcoCR63FORFAP</shortName>
    </alternativeName>
</protein>
<sequence>MSRFIQGDCVRVMATFPGNAVDFILTDPPYLVGFRDRQGRTIAGDKTDEWLQPACNEMYRVLKKDALMVSFYGWNRVDRFMAAWKNAGFSVVGHLVFTKTYTSKAAYVGYRHECAYILAKGRPALPQKPLPDVLGWKYSGNRHHPTEKPVTSLQPLIESFTHPNAIVLDPFAGSGSTCVAALQSGRRYIGIELLEQYHRAGQQRLAAVQRAMQQGAANDDWFMPEAA</sequence>
<reference key="1">
    <citation type="journal article" date="1999" name="Plasmid">
        <title>Nucleotide sequence of the F plasmid leading region.</title>
        <authorList>
            <person name="Manwaring N.P."/>
            <person name="Skurray R.A."/>
            <person name="Firth N."/>
        </authorList>
    </citation>
    <scope>NUCLEOTIDE SEQUENCE [GENOMIC DNA]</scope>
</reference>
<reference key="2">
    <citation type="submission" date="2000-04" db="EMBL/GenBank/DDBJ databases">
        <title>Complete nucleotide sequence of the F plasmid: its implications for organization and diversification of plasmid genomes.</title>
        <authorList>
            <person name="Shimizu H."/>
            <person name="Saitoh Y."/>
            <person name="Suda Y."/>
            <person name="Uehara K."/>
            <person name="Sampei G."/>
            <person name="Mizobuchi K."/>
        </authorList>
    </citation>
    <scope>NUCLEOTIDE SEQUENCE [LARGE SCALE GENOMIC DNA]</scope>
    <source>
        <strain>K12 / CR63</strain>
    </source>
</reference>
<reference key="3">
    <citation type="journal article" date="2003" name="Nucleic Acids Res.">
        <title>A nomenclature for restriction enzymes, DNA methyltransferases, homing endonucleases and their genes.</title>
        <authorList>
            <person name="Roberts R.J."/>
            <person name="Belfort M."/>
            <person name="Bestor T."/>
            <person name="Bhagwat A.S."/>
            <person name="Bickle T.A."/>
            <person name="Bitinaite J."/>
            <person name="Blumenthal R.M."/>
            <person name="Degtyarev S.K."/>
            <person name="Dryden D.T."/>
            <person name="Dybvig K."/>
            <person name="Firman K."/>
            <person name="Gromova E.S."/>
            <person name="Gumport R.I."/>
            <person name="Halford S.E."/>
            <person name="Hattman S."/>
            <person name="Heitman J."/>
            <person name="Hornby D.P."/>
            <person name="Janulaitis A."/>
            <person name="Jeltsch A."/>
            <person name="Josephsen J."/>
            <person name="Kiss A."/>
            <person name="Klaenhammer T.R."/>
            <person name="Kobayashi I."/>
            <person name="Kong H."/>
            <person name="Krueger D.H."/>
            <person name="Lacks S."/>
            <person name="Marinus M.G."/>
            <person name="Miyahara M."/>
            <person name="Morgan R.D."/>
            <person name="Murray N.E."/>
            <person name="Nagaraja V."/>
            <person name="Piekarowicz A."/>
            <person name="Pingoud A."/>
            <person name="Raleigh E."/>
            <person name="Rao D.N."/>
            <person name="Reich N."/>
            <person name="Repin V.E."/>
            <person name="Selker E.U."/>
            <person name="Shaw P.C."/>
            <person name="Stein D.C."/>
            <person name="Stoddard B.L."/>
            <person name="Szybalski W."/>
            <person name="Trautner T.A."/>
            <person name="Van Etten J.L."/>
            <person name="Vitor J.M."/>
            <person name="Wilson G.G."/>
            <person name="Xu S.Y."/>
        </authorList>
    </citation>
    <scope>NOMENCLATURE</scope>
    <scope>SUBTYPE</scope>
</reference>
<feature type="chain" id="PRO_0000262305" description="Putative methylase YubD">
    <location>
        <begin position="1"/>
        <end position="227"/>
    </location>
</feature>
<keyword id="KW-0489">Methyltransferase</keyword>
<keyword id="KW-0614">Plasmid</keyword>
<keyword id="KW-0808">Transferase</keyword>
<proteinExistence type="inferred from homology"/>
<geneLocation type="plasmid">
    <name>F</name>
</geneLocation>
<name>YUBD_ECOLI</name>
<gene>
    <name type="primary">yubD</name>
    <name type="synonym">yfeA</name>
    <name type="ordered locus">ECOK12F052</name>
</gene>